<reference key="1">
    <citation type="submission" date="2006-01" db="EMBL/GenBank/DDBJ databases">
        <title>A comparison of the first two published chloroplast genomes in Asteraceae: Lactuca and Helianthus.</title>
        <authorList>
            <person name="Timme R.E."/>
            <person name="Kuehl J.V."/>
            <person name="Boore J.L."/>
            <person name="Jansen R.K."/>
        </authorList>
    </citation>
    <scope>NUCLEOTIDE SEQUENCE [LARGE SCALE GENOMIC DNA]</scope>
    <source>
        <strain>cv. HA383</strain>
    </source>
</reference>
<comment type="function">
    <text evidence="1">F(1)F(0) ATP synthase produces ATP from ADP in the presence of a proton or sodium gradient. F-type ATPases consist of two structural domains, F(1) containing the extramembraneous catalytic core and F(0) containing the membrane proton channel, linked together by a central stalk and a peripheral stalk. During catalysis, ATP synthesis in the catalytic domain of F(1) is coupled via a rotary mechanism of the central stalk subunits to proton translocation.</text>
</comment>
<comment type="function">
    <text evidence="1">Component of the F(0) channel, it forms part of the peripheral stalk, linking F(1) to F(0).</text>
</comment>
<comment type="subunit">
    <text evidence="1">F-type ATPases have 2 components, F(1) - the catalytic core - and F(0) - the membrane proton channel. F(1) has five subunits: alpha(3), beta(3), gamma(1), delta(1), epsilon(1). F(0) has four main subunits: a(1), b(1), b'(1) and c(10-14). The alpha and beta chains form an alternating ring which encloses part of the gamma chain. F(1) is attached to F(0) by a central stalk formed by the gamma and epsilon chains, while a peripheral stalk is formed by the delta, b and b' chains.</text>
</comment>
<comment type="subcellular location">
    <subcellularLocation>
        <location evidence="1">Plastid</location>
        <location evidence="1">Chloroplast thylakoid membrane</location>
        <topology evidence="1">Single-pass membrane protein</topology>
    </subcellularLocation>
</comment>
<comment type="miscellaneous">
    <text>In plastids the F-type ATPase is also known as CF(1)CF(0).</text>
</comment>
<comment type="similarity">
    <text evidence="1">Belongs to the ATPase B chain family.</text>
</comment>
<feature type="chain" id="PRO_0000368938" description="ATP synthase subunit b, chloroplastic">
    <location>
        <begin position="1"/>
        <end position="184"/>
    </location>
</feature>
<feature type="transmembrane region" description="Helical" evidence="1">
    <location>
        <begin position="27"/>
        <end position="49"/>
    </location>
</feature>
<geneLocation type="chloroplast"/>
<accession>Q1KXW6</accession>
<organism>
    <name type="scientific">Helianthus annuus</name>
    <name type="common">Common sunflower</name>
    <dbReference type="NCBI Taxonomy" id="4232"/>
    <lineage>
        <taxon>Eukaryota</taxon>
        <taxon>Viridiplantae</taxon>
        <taxon>Streptophyta</taxon>
        <taxon>Embryophyta</taxon>
        <taxon>Tracheophyta</taxon>
        <taxon>Spermatophyta</taxon>
        <taxon>Magnoliopsida</taxon>
        <taxon>eudicotyledons</taxon>
        <taxon>Gunneridae</taxon>
        <taxon>Pentapetalae</taxon>
        <taxon>asterids</taxon>
        <taxon>campanulids</taxon>
        <taxon>Asterales</taxon>
        <taxon>Asteraceae</taxon>
        <taxon>Asteroideae</taxon>
        <taxon>Heliantheae alliance</taxon>
        <taxon>Heliantheae</taxon>
        <taxon>Helianthus</taxon>
    </lineage>
</organism>
<protein>
    <recommendedName>
        <fullName evidence="1">ATP synthase subunit b, chloroplastic</fullName>
    </recommendedName>
    <alternativeName>
        <fullName evidence="1">ATP synthase F(0) sector subunit b</fullName>
    </alternativeName>
    <alternativeName>
        <fullName evidence="1">ATPase subunit I</fullName>
    </alternativeName>
</protein>
<name>ATPF_HELAN</name>
<gene>
    <name evidence="1" type="primary">atpF</name>
</gene>
<sequence length="184" mass="20827">MKNVTDSFVSLGHWPSAGSFGFNTDILATNLINLSVVLGVLIFFGKGVLSDLLDNRKQRILNTIRNSEELREGAIEQLEKARARLRKIEIEADEFRVNGYSEIEREKLNLIDSTYKTLEQLENYKNETINFEQQKASNQVRQRVFQQALQGALGTLNSCLNNELHLRTISANIGILAAMKQITD</sequence>
<keyword id="KW-0066">ATP synthesis</keyword>
<keyword id="KW-0138">CF(0)</keyword>
<keyword id="KW-0150">Chloroplast</keyword>
<keyword id="KW-0375">Hydrogen ion transport</keyword>
<keyword id="KW-0406">Ion transport</keyword>
<keyword id="KW-0472">Membrane</keyword>
<keyword id="KW-0934">Plastid</keyword>
<keyword id="KW-0793">Thylakoid</keyword>
<keyword id="KW-0812">Transmembrane</keyword>
<keyword id="KW-1133">Transmembrane helix</keyword>
<keyword id="KW-0813">Transport</keyword>
<evidence type="ECO:0000255" key="1">
    <source>
        <dbReference type="HAMAP-Rule" id="MF_01398"/>
    </source>
</evidence>
<proteinExistence type="inferred from homology"/>
<dbReference type="EMBL" id="DQ383815">
    <property type="protein sequence ID" value="ABD47139.1"/>
    <property type="molecule type" value="Genomic_DNA"/>
</dbReference>
<dbReference type="RefSeq" id="YP_588110.1">
    <property type="nucleotide sequence ID" value="NC_007977.1"/>
</dbReference>
<dbReference type="SMR" id="Q1KXW6"/>
<dbReference type="GeneID" id="4055578"/>
<dbReference type="KEGG" id="han:4055578"/>
<dbReference type="OrthoDB" id="1900203at2759"/>
<dbReference type="GO" id="GO:0009535">
    <property type="term" value="C:chloroplast thylakoid membrane"/>
    <property type="evidence" value="ECO:0007669"/>
    <property type="project" value="UniProtKB-SubCell"/>
</dbReference>
<dbReference type="GO" id="GO:0045259">
    <property type="term" value="C:proton-transporting ATP synthase complex"/>
    <property type="evidence" value="ECO:0007669"/>
    <property type="project" value="UniProtKB-KW"/>
</dbReference>
<dbReference type="GO" id="GO:0046933">
    <property type="term" value="F:proton-transporting ATP synthase activity, rotational mechanism"/>
    <property type="evidence" value="ECO:0007669"/>
    <property type="project" value="UniProtKB-UniRule"/>
</dbReference>
<dbReference type="CDD" id="cd06503">
    <property type="entry name" value="ATP-synt_Fo_b"/>
    <property type="match status" value="1"/>
</dbReference>
<dbReference type="HAMAP" id="MF_01398">
    <property type="entry name" value="ATP_synth_b_bprime"/>
    <property type="match status" value="1"/>
</dbReference>
<dbReference type="InterPro" id="IPR002146">
    <property type="entry name" value="ATP_synth_b/b'su_bac/chlpt"/>
</dbReference>
<dbReference type="PANTHER" id="PTHR34264">
    <property type="entry name" value="ATP SYNTHASE SUBUNIT B, CHLOROPLASTIC"/>
    <property type="match status" value="1"/>
</dbReference>
<dbReference type="PANTHER" id="PTHR34264:SF3">
    <property type="entry name" value="ATP SYNTHASE SUBUNIT B, CHLOROPLASTIC"/>
    <property type="match status" value="1"/>
</dbReference>
<dbReference type="Pfam" id="PF00430">
    <property type="entry name" value="ATP-synt_B"/>
    <property type="match status" value="1"/>
</dbReference>